<accession>O82711</accession>
<keyword id="KW-1015">Disulfide bond</keyword>
<keyword id="KW-0325">Glycoprotein</keyword>
<keyword id="KW-0646">Protease inhibitor</keyword>
<keyword id="KW-0964">Secreted</keyword>
<keyword id="KW-0722">Serine protease inhibitor</keyword>
<keyword id="KW-0732">Signal</keyword>
<comment type="function">
    <text evidence="1 3">Might act as a protease inhibitor involved in plant defense responses.</text>
</comment>
<comment type="subcellular location">
    <subcellularLocation>
        <location evidence="4">Secreted</location>
    </subcellularLocation>
</comment>
<comment type="similarity">
    <text evidence="4">Belongs to the protease inhibitor I3 (leguminous Kunitz-type inhibitor) family.</text>
</comment>
<comment type="caution">
    <text evidence="5">Was originally thought to be an alpha-L-fucosidase.</text>
</comment>
<reference key="1">
    <citation type="thesis" date="1998" institute="University of Barcelona" country="Spain">
        <authorList>
            <person name="Martinez I.M."/>
        </authorList>
    </citation>
    <scope>NUCLEOTIDE SEQUENCE [GENOMIC DNA]</scope>
</reference>
<reference key="2">
    <citation type="journal article" date="1995" name="J. Biol. Chem.">
        <title>Molecular cloning and pattern of expression of an alpha-L-fucosidase gene from pea seedlings.</title>
        <authorList>
            <person name="Augur C."/>
            <person name="Stiefel V."/>
            <person name="Darvill A."/>
            <person name="Albersheim P."/>
            <person name="Puigdomenech P."/>
        </authorList>
    </citation>
    <scope>IDENTIFICATION</scope>
</reference>
<reference key="3">
    <citation type="journal article" date="2003" name="Plant Mol. Biol.">
        <title>The fuc1 gene product (20 kDa FUC1) of Pisum sativum has no alpha-L-fucosidase activity.</title>
        <authorList>
            <person name="Tarrago T."/>
            <person name="Martinez I."/>
            <person name="Torrent M."/>
            <person name="Codina A."/>
            <person name="Giralt E."/>
            <person name="Puigdomenech P."/>
            <person name="Ludevid D."/>
        </authorList>
    </citation>
    <scope>FUNCTION REVISION</scope>
</reference>
<proteinExistence type="inferred from homology"/>
<dbReference type="EMBL" id="AJ011398">
    <property type="protein sequence ID" value="CAA09607.1"/>
    <property type="molecule type" value="Genomic_DNA"/>
</dbReference>
<dbReference type="SMR" id="O82711"/>
<dbReference type="MEROPS" id="I03.025"/>
<dbReference type="GlyCosmos" id="O82711">
    <property type="glycosylation" value="1 site, No reported glycans"/>
</dbReference>
<dbReference type="GO" id="GO:0005576">
    <property type="term" value="C:extracellular region"/>
    <property type="evidence" value="ECO:0007669"/>
    <property type="project" value="UniProtKB-SubCell"/>
</dbReference>
<dbReference type="GO" id="GO:0004867">
    <property type="term" value="F:serine-type endopeptidase inhibitor activity"/>
    <property type="evidence" value="ECO:0007669"/>
    <property type="project" value="UniProtKB-KW"/>
</dbReference>
<dbReference type="CDD" id="cd23377">
    <property type="entry name" value="beta-trefoil_STI_MP4-like"/>
    <property type="match status" value="1"/>
</dbReference>
<dbReference type="Gene3D" id="2.80.10.50">
    <property type="match status" value="1"/>
</dbReference>
<dbReference type="InterPro" id="IPR011065">
    <property type="entry name" value="Kunitz_inhibitor_STI-like_sf"/>
</dbReference>
<dbReference type="InterPro" id="IPR002160">
    <property type="entry name" value="Prot_inh_Kunz-lg"/>
</dbReference>
<dbReference type="PANTHER" id="PTHR33107:SF21">
    <property type="entry name" value="KUNITZ FAMILY TRYPSIN AND PROTEASE INHIBITOR PROTEIN"/>
    <property type="match status" value="1"/>
</dbReference>
<dbReference type="PANTHER" id="PTHR33107">
    <property type="entry name" value="KUNITZ TRYPSIN INHIBITOR 2"/>
    <property type="match status" value="1"/>
</dbReference>
<dbReference type="Pfam" id="PF00197">
    <property type="entry name" value="Kunitz_legume"/>
    <property type="match status" value="1"/>
</dbReference>
<dbReference type="PRINTS" id="PR00291">
    <property type="entry name" value="KUNITZINHBTR"/>
</dbReference>
<dbReference type="SMART" id="SM00452">
    <property type="entry name" value="STI"/>
    <property type="match status" value="1"/>
</dbReference>
<dbReference type="SUPFAM" id="SSF50386">
    <property type="entry name" value="STI-like"/>
    <property type="match status" value="1"/>
</dbReference>
<dbReference type="PROSITE" id="PS00283">
    <property type="entry name" value="SOYBEAN_KUNITZ"/>
    <property type="match status" value="1"/>
</dbReference>
<sequence>MKPLSPLTLSFLLFVFITTLSLAFSNEDVEQVLDVNGKPIFPGGQYYILPAIRGPPGGGVRLGRTGDLTCPVTVLQDRREVKNGLPVKFVIPGISPGIIFTGTPIEIEYTKKPNCAKSSKWLVFVDNVIQKACVGIGGPENYPGIQTLSGLFKIEKHESGFGYKLGFCIKGSPTCLDVGRFDNDEAGRRLNLTEHESFQVVFVEAEANDAEFIKSVV</sequence>
<protein>
    <recommendedName>
        <fullName>Kunitz-type trypsin inhibitor-like 2 protein</fullName>
    </recommendedName>
    <alternativeName>
        <fullName>Protease inhibitor from pea 2</fullName>
    </alternativeName>
</protein>
<evidence type="ECO:0000250" key="1"/>
<evidence type="ECO:0000255" key="2"/>
<evidence type="ECO:0000269" key="3">
    <source>
    </source>
</evidence>
<evidence type="ECO:0000305" key="4"/>
<evidence type="ECO:0000305" key="5">
    <source>
    </source>
</evidence>
<name>PIP22_PEA</name>
<organism>
    <name type="scientific">Pisum sativum</name>
    <name type="common">Garden pea</name>
    <name type="synonym">Lathyrus oleraceus</name>
    <dbReference type="NCBI Taxonomy" id="3888"/>
    <lineage>
        <taxon>Eukaryota</taxon>
        <taxon>Viridiplantae</taxon>
        <taxon>Streptophyta</taxon>
        <taxon>Embryophyta</taxon>
        <taxon>Tracheophyta</taxon>
        <taxon>Spermatophyta</taxon>
        <taxon>Magnoliopsida</taxon>
        <taxon>eudicotyledons</taxon>
        <taxon>Gunneridae</taxon>
        <taxon>Pentapetalae</taxon>
        <taxon>rosids</taxon>
        <taxon>fabids</taxon>
        <taxon>Fabales</taxon>
        <taxon>Fabaceae</taxon>
        <taxon>Papilionoideae</taxon>
        <taxon>50 kb inversion clade</taxon>
        <taxon>NPAAA clade</taxon>
        <taxon>Hologalegina</taxon>
        <taxon>IRL clade</taxon>
        <taxon>Fabeae</taxon>
        <taxon>Pisum</taxon>
    </lineage>
</organism>
<feature type="signal peptide" evidence="2">
    <location>
        <begin position="1"/>
        <end position="26"/>
    </location>
</feature>
<feature type="chain" id="PRO_5000064559" description="Kunitz-type trypsin inhibitor-like 2 protein">
    <location>
        <begin position="27"/>
        <end position="217"/>
    </location>
</feature>
<feature type="glycosylation site" description="N-linked (GlcNAc...) asparagine" evidence="2">
    <location>
        <position position="191"/>
    </location>
</feature>
<feature type="disulfide bond" evidence="1">
    <location>
        <begin position="70"/>
        <end position="115"/>
    </location>
</feature>
<feature type="disulfide bond" evidence="1">
    <location>
        <begin position="168"/>
        <end position="175"/>
    </location>
</feature>
<gene>
    <name type="primary">PIP20-2</name>
    <name type="synonym">FUC2</name>
</gene>